<reference key="1">
    <citation type="journal article" date="2006" name="PLoS Genet.">
        <title>Genome sequence of Rickettsia bellii illuminates the role of amoebae in gene exchanges between intracellular pathogens.</title>
        <authorList>
            <person name="Ogata H."/>
            <person name="La Scola B."/>
            <person name="Audic S."/>
            <person name="Renesto P."/>
            <person name="Blanc G."/>
            <person name="Robert C."/>
            <person name="Fournier P.-E."/>
            <person name="Claverie J.-M."/>
            <person name="Raoult D."/>
        </authorList>
    </citation>
    <scope>NUCLEOTIDE SEQUENCE [LARGE SCALE GENOMIC DNA]</scope>
    <source>
        <strain>RML369-C</strain>
    </source>
</reference>
<organism>
    <name type="scientific">Rickettsia bellii (strain RML369-C)</name>
    <dbReference type="NCBI Taxonomy" id="336407"/>
    <lineage>
        <taxon>Bacteria</taxon>
        <taxon>Pseudomonadati</taxon>
        <taxon>Pseudomonadota</taxon>
        <taxon>Alphaproteobacteria</taxon>
        <taxon>Rickettsiales</taxon>
        <taxon>Rickettsiaceae</taxon>
        <taxon>Rickettsieae</taxon>
        <taxon>Rickettsia</taxon>
        <taxon>belli group</taxon>
    </lineage>
</organism>
<dbReference type="EMBL" id="CP000087">
    <property type="protein sequence ID" value="ABE04595.1"/>
    <property type="molecule type" value="Genomic_DNA"/>
</dbReference>
<dbReference type="RefSeq" id="WP_011477186.1">
    <property type="nucleotide sequence ID" value="NC_007940.1"/>
</dbReference>
<dbReference type="SMR" id="Q1RJ69"/>
<dbReference type="KEGG" id="rbe:RBE_0514"/>
<dbReference type="eggNOG" id="COG0633">
    <property type="taxonomic scope" value="Bacteria"/>
</dbReference>
<dbReference type="HOGENOM" id="CLU_082632_5_0_5"/>
<dbReference type="OrthoDB" id="9799640at2"/>
<dbReference type="Proteomes" id="UP000001951">
    <property type="component" value="Chromosome"/>
</dbReference>
<dbReference type="GO" id="GO:0051537">
    <property type="term" value="F:2 iron, 2 sulfur cluster binding"/>
    <property type="evidence" value="ECO:0007669"/>
    <property type="project" value="UniProtKB-KW"/>
</dbReference>
<dbReference type="GO" id="GO:0009055">
    <property type="term" value="F:electron transfer activity"/>
    <property type="evidence" value="ECO:0007669"/>
    <property type="project" value="TreeGrafter"/>
</dbReference>
<dbReference type="GO" id="GO:0046872">
    <property type="term" value="F:metal ion binding"/>
    <property type="evidence" value="ECO:0007669"/>
    <property type="project" value="UniProtKB-KW"/>
</dbReference>
<dbReference type="GO" id="GO:0140647">
    <property type="term" value="P:P450-containing electron transport chain"/>
    <property type="evidence" value="ECO:0007669"/>
    <property type="project" value="InterPro"/>
</dbReference>
<dbReference type="CDD" id="cd00207">
    <property type="entry name" value="fer2"/>
    <property type="match status" value="1"/>
</dbReference>
<dbReference type="Gene3D" id="3.10.20.30">
    <property type="match status" value="1"/>
</dbReference>
<dbReference type="InterPro" id="IPR036010">
    <property type="entry name" value="2Fe-2S_ferredoxin-like_sf"/>
</dbReference>
<dbReference type="InterPro" id="IPR001041">
    <property type="entry name" value="2Fe-2S_ferredoxin-type"/>
</dbReference>
<dbReference type="InterPro" id="IPR001055">
    <property type="entry name" value="Adrenodoxin-like"/>
</dbReference>
<dbReference type="InterPro" id="IPR018298">
    <property type="entry name" value="Adrenodoxin_Fe-S_BS"/>
</dbReference>
<dbReference type="InterPro" id="IPR012675">
    <property type="entry name" value="Beta-grasp_dom_sf"/>
</dbReference>
<dbReference type="PANTHER" id="PTHR23426:SF72">
    <property type="entry name" value="2FE-2S FERREDOXIN-TYPE DOMAIN-CONTAINING PROTEIN"/>
    <property type="match status" value="1"/>
</dbReference>
<dbReference type="PANTHER" id="PTHR23426">
    <property type="entry name" value="FERREDOXIN/ADRENODOXIN"/>
    <property type="match status" value="1"/>
</dbReference>
<dbReference type="Pfam" id="PF00111">
    <property type="entry name" value="Fer2"/>
    <property type="match status" value="1"/>
</dbReference>
<dbReference type="PRINTS" id="PR00355">
    <property type="entry name" value="ADRENODOXIN"/>
</dbReference>
<dbReference type="SUPFAM" id="SSF54292">
    <property type="entry name" value="2Fe-2S ferredoxin-like"/>
    <property type="match status" value="1"/>
</dbReference>
<dbReference type="PROSITE" id="PS51085">
    <property type="entry name" value="2FE2S_FER_2"/>
    <property type="match status" value="1"/>
</dbReference>
<dbReference type="PROSITE" id="PS00814">
    <property type="entry name" value="ADX"/>
    <property type="match status" value="1"/>
</dbReference>
<sequence length="111" mass="12235">MSKTIKVTFVINNGEEKIIEAPLGLSILEVAHSNSIDLEGACEGSLACATCHVILEEEFYNKLEKPKEEEEDMLDLAFGLTDTSRLGCQIILTEKLDGIKVRLPSATRNIK</sequence>
<keyword id="KW-0001">2Fe-2S</keyword>
<keyword id="KW-0249">Electron transport</keyword>
<keyword id="KW-0408">Iron</keyword>
<keyword id="KW-0411">Iron-sulfur</keyword>
<keyword id="KW-0479">Metal-binding</keyword>
<keyword id="KW-0813">Transport</keyword>
<name>FER2_RICBR</name>
<accession>Q1RJ69</accession>
<evidence type="ECO:0000250" key="1"/>
<evidence type="ECO:0000255" key="2">
    <source>
        <dbReference type="PROSITE-ProRule" id="PRU00465"/>
    </source>
</evidence>
<evidence type="ECO:0000305" key="3"/>
<gene>
    <name type="primary">fdxB</name>
    <name type="ordered locus">RBE_0514</name>
</gene>
<feature type="chain" id="PRO_0000280895" description="2Fe-2S ferredoxin">
    <location>
        <begin position="1"/>
        <end position="111"/>
    </location>
</feature>
<feature type="domain" description="2Fe-2S ferredoxin-type" evidence="2">
    <location>
        <begin position="5"/>
        <end position="107"/>
    </location>
</feature>
<feature type="binding site" evidence="2">
    <location>
        <position position="42"/>
    </location>
    <ligand>
        <name>[2Fe-2S] cluster</name>
        <dbReference type="ChEBI" id="CHEBI:190135"/>
    </ligand>
</feature>
<feature type="binding site" evidence="2">
    <location>
        <position position="48"/>
    </location>
    <ligand>
        <name>[2Fe-2S] cluster</name>
        <dbReference type="ChEBI" id="CHEBI:190135"/>
    </ligand>
</feature>
<feature type="binding site" evidence="2">
    <location>
        <position position="51"/>
    </location>
    <ligand>
        <name>[2Fe-2S] cluster</name>
        <dbReference type="ChEBI" id="CHEBI:190135"/>
    </ligand>
</feature>
<feature type="binding site" evidence="2">
    <location>
        <position position="88"/>
    </location>
    <ligand>
        <name>[2Fe-2S] cluster</name>
        <dbReference type="ChEBI" id="CHEBI:190135"/>
    </ligand>
</feature>
<comment type="function">
    <text>Ferredoxin are iron-sulfur proteins that transfer electrons in a wide variety of metabolic reactions.</text>
</comment>
<comment type="cofactor">
    <cofactor evidence="1">
        <name>[2Fe-2S] cluster</name>
        <dbReference type="ChEBI" id="CHEBI:190135"/>
    </cofactor>
    <text evidence="1">Binds 1 [2Fe-2S] cluster.</text>
</comment>
<comment type="similarity">
    <text evidence="3">Belongs to the adrenodoxin/putidaredoxin family.</text>
</comment>
<proteinExistence type="inferred from homology"/>
<protein>
    <recommendedName>
        <fullName>2Fe-2S ferredoxin</fullName>
    </recommendedName>
    <alternativeName>
        <fullName>Adrenodoxin-like protein</fullName>
    </alternativeName>
</protein>